<keyword id="KW-0002">3D-structure</keyword>
<keyword id="KW-0269">Exonuclease</keyword>
<keyword id="KW-0271">Exosome</keyword>
<keyword id="KW-0378">Hydrolase</keyword>
<keyword id="KW-0540">Nuclease</keyword>
<keyword id="KW-0539">Nucleus</keyword>
<keyword id="KW-0597">Phosphoprotein</keyword>
<keyword id="KW-1185">Reference proteome</keyword>
<keyword id="KW-0694">RNA-binding</keyword>
<keyword id="KW-0698">rRNA processing</keyword>
<dbReference type="EC" id="3.1.13.-" evidence="5 14"/>
<dbReference type="EMBL" id="Z74909">
    <property type="protein sequence ID" value="CAA99189.1"/>
    <property type="molecule type" value="Genomic_DNA"/>
</dbReference>
<dbReference type="EMBL" id="U43491">
    <property type="protein sequence ID" value="AAC49480.1"/>
    <property type="molecule type" value="Genomic_DNA"/>
</dbReference>
<dbReference type="EMBL" id="AY692850">
    <property type="protein sequence ID" value="AAT92869.1"/>
    <property type="molecule type" value="Genomic_DNA"/>
</dbReference>
<dbReference type="EMBL" id="BK006948">
    <property type="protein sequence ID" value="DAA10783.1"/>
    <property type="molecule type" value="Genomic_DNA"/>
</dbReference>
<dbReference type="PIR" id="S61984">
    <property type="entry name" value="S61984"/>
</dbReference>
<dbReference type="RefSeq" id="NP_014643.1">
    <property type="nucleotide sequence ID" value="NM_001183420.1"/>
</dbReference>
<dbReference type="PDB" id="2HBJ">
    <property type="method" value="X-ray"/>
    <property type="resolution" value="2.10 A"/>
    <property type="chains" value="A=129-536"/>
</dbReference>
<dbReference type="PDB" id="2HBK">
    <property type="method" value="X-ray"/>
    <property type="resolution" value="2.25 A"/>
    <property type="chains" value="A=129-536"/>
</dbReference>
<dbReference type="PDB" id="2HBL">
    <property type="method" value="X-ray"/>
    <property type="resolution" value="2.30 A"/>
    <property type="chains" value="A=129-536"/>
</dbReference>
<dbReference type="PDB" id="2HBM">
    <property type="method" value="X-ray"/>
    <property type="resolution" value="2.70 A"/>
    <property type="chains" value="A=129-536"/>
</dbReference>
<dbReference type="PDB" id="4IFD">
    <property type="method" value="X-ray"/>
    <property type="resolution" value="2.80 A"/>
    <property type="chains" value="K=518-693"/>
</dbReference>
<dbReference type="PDB" id="4OO1">
    <property type="method" value="X-ray"/>
    <property type="resolution" value="3.30 A"/>
    <property type="chains" value="J=129-685"/>
</dbReference>
<dbReference type="PDB" id="4WFC">
    <property type="method" value="X-ray"/>
    <property type="resolution" value="2.35 A"/>
    <property type="chains" value="A/C/E=1-111"/>
</dbReference>
<dbReference type="PDB" id="4WFD">
    <property type="method" value="X-ray"/>
    <property type="resolution" value="2.40 A"/>
    <property type="chains" value="A/D/G=1-111"/>
</dbReference>
<dbReference type="PDB" id="5C0W">
    <property type="method" value="X-ray"/>
    <property type="resolution" value="4.60 A"/>
    <property type="chains" value="K=1-693"/>
</dbReference>
<dbReference type="PDB" id="5C0X">
    <property type="method" value="X-ray"/>
    <property type="resolution" value="3.81 A"/>
    <property type="chains" value="K=1-693"/>
</dbReference>
<dbReference type="PDB" id="5C0Y">
    <property type="method" value="X-ray"/>
    <property type="resolution" value="2.10 A"/>
    <property type="chains" value="A/B=122-518"/>
</dbReference>
<dbReference type="PDB" id="5K36">
    <property type="method" value="X-ray"/>
    <property type="resolution" value="3.10 A"/>
    <property type="chains" value="J=129-684"/>
</dbReference>
<dbReference type="PDB" id="5VZJ">
    <property type="method" value="X-ray"/>
    <property type="resolution" value="3.30 A"/>
    <property type="chains" value="J=129-684"/>
</dbReference>
<dbReference type="PDB" id="6FSZ">
    <property type="method" value="EM"/>
    <property type="resolution" value="4.60 A"/>
    <property type="chains" value="KK=1-733"/>
</dbReference>
<dbReference type="PDB" id="6FT6">
    <property type="method" value="EM"/>
    <property type="resolution" value="3.90 A"/>
    <property type="chains" value="KK=1-733"/>
</dbReference>
<dbReference type="PDB" id="6LQS">
    <property type="method" value="EM"/>
    <property type="resolution" value="3.80 A"/>
    <property type="chains" value="r6=1-733"/>
</dbReference>
<dbReference type="PDB" id="7D4I">
    <property type="method" value="EM"/>
    <property type="resolution" value="4.00 A"/>
    <property type="chains" value="r6=1-733"/>
</dbReference>
<dbReference type="PDBsum" id="2HBJ"/>
<dbReference type="PDBsum" id="2HBK"/>
<dbReference type="PDBsum" id="2HBL"/>
<dbReference type="PDBsum" id="2HBM"/>
<dbReference type="PDBsum" id="4IFD"/>
<dbReference type="PDBsum" id="4OO1"/>
<dbReference type="PDBsum" id="4WFC"/>
<dbReference type="PDBsum" id="4WFD"/>
<dbReference type="PDBsum" id="5C0W"/>
<dbReference type="PDBsum" id="5C0X"/>
<dbReference type="PDBsum" id="5C0Y"/>
<dbReference type="PDBsum" id="5K36"/>
<dbReference type="PDBsum" id="5VZJ"/>
<dbReference type="PDBsum" id="6FSZ"/>
<dbReference type="PDBsum" id="6FT6"/>
<dbReference type="PDBsum" id="6LQS"/>
<dbReference type="PDBsum" id="7D4I"/>
<dbReference type="EMDB" id="EMD-0952"/>
<dbReference type="EMDB" id="EMD-30574"/>
<dbReference type="EMDB" id="EMD-4301"/>
<dbReference type="EMDB" id="EMD-4302"/>
<dbReference type="SMR" id="Q12149"/>
<dbReference type="BioGRID" id="34404">
    <property type="interactions" value="944"/>
</dbReference>
<dbReference type="ComplexPortal" id="CPX-599">
    <property type="entry name" value="Nuclear/nucleolar exosome complex, DIS3-RRP6 variant"/>
</dbReference>
<dbReference type="DIP" id="DIP-4560N"/>
<dbReference type="FunCoup" id="Q12149">
    <property type="interactions" value="1165"/>
</dbReference>
<dbReference type="IntAct" id="Q12149">
    <property type="interactions" value="77"/>
</dbReference>
<dbReference type="MINT" id="Q12149"/>
<dbReference type="STRING" id="4932.YOR001W"/>
<dbReference type="iPTMnet" id="Q12149"/>
<dbReference type="PaxDb" id="4932-YOR001W"/>
<dbReference type="PeptideAtlas" id="Q12149"/>
<dbReference type="EnsemblFungi" id="YOR001W_mRNA">
    <property type="protein sequence ID" value="YOR001W"/>
    <property type="gene ID" value="YOR001W"/>
</dbReference>
<dbReference type="GeneID" id="854162"/>
<dbReference type="KEGG" id="sce:YOR001W"/>
<dbReference type="AGR" id="SGD:S000005527"/>
<dbReference type="SGD" id="S000005527">
    <property type="gene designation" value="RRP6"/>
</dbReference>
<dbReference type="VEuPathDB" id="FungiDB:YOR001W"/>
<dbReference type="eggNOG" id="KOG2206">
    <property type="taxonomic scope" value="Eukaryota"/>
</dbReference>
<dbReference type="GeneTree" id="ENSGT00390000015408"/>
<dbReference type="HOGENOM" id="CLU_010129_3_2_1"/>
<dbReference type="InParanoid" id="Q12149"/>
<dbReference type="OMA" id="LEYKFLH"/>
<dbReference type="OrthoDB" id="2250022at2759"/>
<dbReference type="BioCyc" id="YEAST:G3O-33552-MONOMER"/>
<dbReference type="Reactome" id="R-SCE-6791226">
    <property type="pathway name" value="Major pathway of rRNA processing in the nucleolus and cytosol"/>
</dbReference>
<dbReference type="BioGRID-ORCS" id="854162">
    <property type="hits" value="3 hits in 10 CRISPR screens"/>
</dbReference>
<dbReference type="CD-CODE" id="BDAE0F88">
    <property type="entry name" value="Nucleolus"/>
</dbReference>
<dbReference type="EvolutionaryTrace" id="Q12149"/>
<dbReference type="PRO" id="PR:Q12149"/>
<dbReference type="Proteomes" id="UP000002311">
    <property type="component" value="Chromosome XV"/>
</dbReference>
<dbReference type="RNAct" id="Q12149">
    <property type="molecule type" value="protein"/>
</dbReference>
<dbReference type="GO" id="GO:0000178">
    <property type="term" value="C:exosome (RNase complex)"/>
    <property type="evidence" value="ECO:0000353"/>
    <property type="project" value="ComplexPortal"/>
</dbReference>
<dbReference type="GO" id="GO:0000176">
    <property type="term" value="C:nuclear exosome (RNase complex)"/>
    <property type="evidence" value="ECO:0000314"/>
    <property type="project" value="SGD"/>
</dbReference>
<dbReference type="GO" id="GO:0005730">
    <property type="term" value="C:nucleolus"/>
    <property type="evidence" value="ECO:0000314"/>
    <property type="project" value="SGD"/>
</dbReference>
<dbReference type="GO" id="GO:0005634">
    <property type="term" value="C:nucleus"/>
    <property type="evidence" value="ECO:0000314"/>
    <property type="project" value="ComplexPortal"/>
</dbReference>
<dbReference type="GO" id="GO:0000175">
    <property type="term" value="F:3'-5'-RNA exonuclease activity"/>
    <property type="evidence" value="ECO:0000314"/>
    <property type="project" value="SGD"/>
</dbReference>
<dbReference type="GO" id="GO:0000166">
    <property type="term" value="F:nucleotide binding"/>
    <property type="evidence" value="ECO:0007669"/>
    <property type="project" value="InterPro"/>
</dbReference>
<dbReference type="GO" id="GO:0042134">
    <property type="term" value="F:rRNA primary transcript binding"/>
    <property type="evidence" value="ECO:0000314"/>
    <property type="project" value="SGD"/>
</dbReference>
<dbReference type="GO" id="GO:0003727">
    <property type="term" value="F:single-stranded RNA binding"/>
    <property type="evidence" value="ECO:0000318"/>
    <property type="project" value="GO_Central"/>
</dbReference>
<dbReference type="GO" id="GO:0000467">
    <property type="term" value="P:exonucleolytic trimming to generate mature 3'-end of 5.8S rRNA from tricistronic rRNA transcript (SSU-rRNA, 5.8S rRNA, LSU-rRNA)"/>
    <property type="evidence" value="ECO:0000315"/>
    <property type="project" value="SGD"/>
</dbReference>
<dbReference type="GO" id="GO:0071044">
    <property type="term" value="P:histone mRNA catabolic process"/>
    <property type="evidence" value="ECO:0000315"/>
    <property type="project" value="SGD"/>
</dbReference>
<dbReference type="GO" id="GO:0071028">
    <property type="term" value="P:nuclear mRNA surveillance"/>
    <property type="evidence" value="ECO:0000315"/>
    <property type="project" value="SGD"/>
</dbReference>
<dbReference type="GO" id="GO:0071040">
    <property type="term" value="P:nuclear polyadenylation-dependent antisense transcript catabolic process"/>
    <property type="evidence" value="ECO:0000315"/>
    <property type="project" value="SGD"/>
</dbReference>
<dbReference type="GO" id="GO:0071039">
    <property type="term" value="P:nuclear polyadenylation-dependent CUT catabolic process"/>
    <property type="evidence" value="ECO:0000315"/>
    <property type="project" value="SGD"/>
</dbReference>
<dbReference type="GO" id="GO:0071042">
    <property type="term" value="P:nuclear polyadenylation-dependent mRNA catabolic process"/>
    <property type="evidence" value="ECO:0000315"/>
    <property type="project" value="SGD"/>
</dbReference>
<dbReference type="GO" id="GO:0071035">
    <property type="term" value="P:nuclear polyadenylation-dependent rRNA catabolic process"/>
    <property type="evidence" value="ECO:0000315"/>
    <property type="project" value="SGD"/>
</dbReference>
<dbReference type="GO" id="GO:0071036">
    <property type="term" value="P:nuclear polyadenylation-dependent snoRNA catabolic process"/>
    <property type="evidence" value="ECO:0000315"/>
    <property type="project" value="SGD"/>
</dbReference>
<dbReference type="GO" id="GO:0071037">
    <property type="term" value="P:nuclear polyadenylation-dependent snRNA catabolic process"/>
    <property type="evidence" value="ECO:0000315"/>
    <property type="project" value="SGD"/>
</dbReference>
<dbReference type="GO" id="GO:0071051">
    <property type="term" value="P:poly(A)-dependent snoRNA 3'-end processing"/>
    <property type="evidence" value="ECO:0000315"/>
    <property type="project" value="SGD"/>
</dbReference>
<dbReference type="GO" id="GO:0000973">
    <property type="term" value="P:post-transcriptional tethering of RNA polymerase II gene DNA at nuclear periphery"/>
    <property type="evidence" value="ECO:0000315"/>
    <property type="project" value="SGD"/>
</dbReference>
<dbReference type="GO" id="GO:0032204">
    <property type="term" value="P:regulation of telomere maintenance"/>
    <property type="evidence" value="ECO:0000315"/>
    <property type="project" value="SGD"/>
</dbReference>
<dbReference type="GO" id="GO:0006401">
    <property type="term" value="P:RNA catabolic process"/>
    <property type="evidence" value="ECO:0000314"/>
    <property type="project" value="ComplexPortal"/>
</dbReference>
<dbReference type="GO" id="GO:0006396">
    <property type="term" value="P:RNA processing"/>
    <property type="evidence" value="ECO:0000314"/>
    <property type="project" value="ComplexPortal"/>
</dbReference>
<dbReference type="GO" id="GO:0071038">
    <property type="term" value="P:TRAMP-dependent tRNA surveillance pathway"/>
    <property type="evidence" value="ECO:0000314"/>
    <property type="project" value="SGD"/>
</dbReference>
<dbReference type="GO" id="GO:0034473">
    <property type="term" value="P:U1 snRNA 3'-end processing"/>
    <property type="evidence" value="ECO:0000315"/>
    <property type="project" value="SGD"/>
</dbReference>
<dbReference type="GO" id="GO:0034475">
    <property type="term" value="P:U4 snRNA 3'-end processing"/>
    <property type="evidence" value="ECO:0000315"/>
    <property type="project" value="SGD"/>
</dbReference>
<dbReference type="GO" id="GO:0034476">
    <property type="term" value="P:U5 snRNA 3'-end processing"/>
    <property type="evidence" value="ECO:0000315"/>
    <property type="project" value="SGD"/>
</dbReference>
<dbReference type="CDD" id="cd06147">
    <property type="entry name" value="Rrp6p_like_exo"/>
    <property type="match status" value="1"/>
</dbReference>
<dbReference type="FunFam" id="3.30.420.10:FF:000163">
    <property type="entry name" value="Exosome complex exonuclease RRP6"/>
    <property type="match status" value="1"/>
</dbReference>
<dbReference type="Gene3D" id="1.20.5.220">
    <property type="match status" value="1"/>
</dbReference>
<dbReference type="Gene3D" id="6.10.250.2660">
    <property type="match status" value="1"/>
</dbReference>
<dbReference type="Gene3D" id="1.10.150.80">
    <property type="entry name" value="HRDC domain"/>
    <property type="match status" value="1"/>
</dbReference>
<dbReference type="Gene3D" id="3.30.420.10">
    <property type="entry name" value="Ribonuclease H-like superfamily/Ribonuclease H"/>
    <property type="match status" value="1"/>
</dbReference>
<dbReference type="InterPro" id="IPR002562">
    <property type="entry name" value="3'-5'_exonuclease_dom"/>
</dbReference>
<dbReference type="InterPro" id="IPR012588">
    <property type="entry name" value="Exosome-assoc_fac_Rrp6_N"/>
</dbReference>
<dbReference type="InterPro" id="IPR010997">
    <property type="entry name" value="HRDC-like_sf"/>
</dbReference>
<dbReference type="InterPro" id="IPR002121">
    <property type="entry name" value="HRDC_dom"/>
</dbReference>
<dbReference type="InterPro" id="IPR044876">
    <property type="entry name" value="HRDC_dom_sf"/>
</dbReference>
<dbReference type="InterPro" id="IPR012337">
    <property type="entry name" value="RNaseH-like_sf"/>
</dbReference>
<dbReference type="InterPro" id="IPR036397">
    <property type="entry name" value="RNaseH_sf"/>
</dbReference>
<dbReference type="InterPro" id="IPR045092">
    <property type="entry name" value="Rrp6-like"/>
</dbReference>
<dbReference type="InterPro" id="IPR049559">
    <property type="entry name" value="Rrp6p-like_exo"/>
</dbReference>
<dbReference type="PANTHER" id="PTHR12124:SF47">
    <property type="entry name" value="EXOSOME COMPONENT 10"/>
    <property type="match status" value="1"/>
</dbReference>
<dbReference type="PANTHER" id="PTHR12124">
    <property type="entry name" value="POLYMYOSITIS/SCLERODERMA AUTOANTIGEN-RELATED"/>
    <property type="match status" value="1"/>
</dbReference>
<dbReference type="Pfam" id="PF01612">
    <property type="entry name" value="DNA_pol_A_exo1"/>
    <property type="match status" value="1"/>
</dbReference>
<dbReference type="Pfam" id="PF00570">
    <property type="entry name" value="HRDC"/>
    <property type="match status" value="1"/>
</dbReference>
<dbReference type="Pfam" id="PF08066">
    <property type="entry name" value="PMC2NT"/>
    <property type="match status" value="1"/>
</dbReference>
<dbReference type="SMART" id="SM00474">
    <property type="entry name" value="35EXOc"/>
    <property type="match status" value="1"/>
</dbReference>
<dbReference type="SMART" id="SM00341">
    <property type="entry name" value="HRDC"/>
    <property type="match status" value="1"/>
</dbReference>
<dbReference type="SUPFAM" id="SSF47819">
    <property type="entry name" value="HRDC-like"/>
    <property type="match status" value="1"/>
</dbReference>
<dbReference type="SUPFAM" id="SSF53098">
    <property type="entry name" value="Ribonuclease H-like"/>
    <property type="match status" value="1"/>
</dbReference>
<dbReference type="PROSITE" id="PS50967">
    <property type="entry name" value="HRDC"/>
    <property type="match status" value="1"/>
</dbReference>
<protein>
    <recommendedName>
        <fullName>Exosome complex exonuclease RRP6</fullName>
        <shortName evidence="16 17">Rrp6p</shortName>
        <ecNumber evidence="5 14">3.1.13.-</ecNumber>
    </recommendedName>
    <alternativeName>
        <fullName>Ribosomal RNA-processing protein 6</fullName>
    </alternativeName>
</protein>
<reference key="1">
    <citation type="journal article" date="1996" name="Yeast">
        <title>The sequence of a 30 kb fragment on the left arm of chromosome XV from Saccharomyces cerevisiae reveals 15 open reading frames, five of which correspond to previously identified genes.</title>
        <authorList>
            <person name="Sterky F."/>
            <person name="Holmberg A."/>
            <person name="Pettersson B."/>
            <person name="Uhlen M."/>
        </authorList>
    </citation>
    <scope>NUCLEOTIDE SEQUENCE [GENOMIC DNA]</scope>
</reference>
<reference key="2">
    <citation type="journal article" date="1997" name="Nature">
        <title>The nucleotide sequence of Saccharomyces cerevisiae chromosome XV.</title>
        <authorList>
            <person name="Dujon B."/>
            <person name="Albermann K."/>
            <person name="Aldea M."/>
            <person name="Alexandraki D."/>
            <person name="Ansorge W."/>
            <person name="Arino J."/>
            <person name="Benes V."/>
            <person name="Bohn C."/>
            <person name="Bolotin-Fukuhara M."/>
            <person name="Bordonne R."/>
            <person name="Boyer J."/>
            <person name="Camasses A."/>
            <person name="Casamayor A."/>
            <person name="Casas C."/>
            <person name="Cheret G."/>
            <person name="Cziepluch C."/>
            <person name="Daignan-Fornier B."/>
            <person name="Dang V.-D."/>
            <person name="de Haan M."/>
            <person name="Delius H."/>
            <person name="Durand P."/>
            <person name="Fairhead C."/>
            <person name="Feldmann H."/>
            <person name="Gaillon L."/>
            <person name="Galisson F."/>
            <person name="Gamo F.-J."/>
            <person name="Gancedo C."/>
            <person name="Goffeau A."/>
            <person name="Goulding S.E."/>
            <person name="Grivell L.A."/>
            <person name="Habbig B."/>
            <person name="Hand N.J."/>
            <person name="Hani J."/>
            <person name="Hattenhorst U."/>
            <person name="Hebling U."/>
            <person name="Hernando Y."/>
            <person name="Herrero E."/>
            <person name="Heumann K."/>
            <person name="Hiesel R."/>
            <person name="Hilger F."/>
            <person name="Hofmann B."/>
            <person name="Hollenberg C.P."/>
            <person name="Hughes B."/>
            <person name="Jauniaux J.-C."/>
            <person name="Kalogeropoulos A."/>
            <person name="Katsoulou C."/>
            <person name="Kordes E."/>
            <person name="Lafuente M.J."/>
            <person name="Landt O."/>
            <person name="Louis E.J."/>
            <person name="Maarse A.C."/>
            <person name="Madania A."/>
            <person name="Mannhaupt G."/>
            <person name="Marck C."/>
            <person name="Martin R.P."/>
            <person name="Mewes H.-W."/>
            <person name="Michaux G."/>
            <person name="Paces V."/>
            <person name="Parle-McDermott A.G."/>
            <person name="Pearson B.M."/>
            <person name="Perrin A."/>
            <person name="Pettersson B."/>
            <person name="Poch O."/>
            <person name="Pohl T.M."/>
            <person name="Poirey R."/>
            <person name="Portetelle D."/>
            <person name="Pujol A."/>
            <person name="Purnelle B."/>
            <person name="Ramezani Rad M."/>
            <person name="Rechmann S."/>
            <person name="Schwager C."/>
            <person name="Schweizer M."/>
            <person name="Sor F."/>
            <person name="Sterky F."/>
            <person name="Tarassov I.A."/>
            <person name="Teodoru C."/>
            <person name="Tettelin H."/>
            <person name="Thierry A."/>
            <person name="Tobiasch E."/>
            <person name="Tzermia M."/>
            <person name="Uhlen M."/>
            <person name="Unseld M."/>
            <person name="Valens M."/>
            <person name="Vandenbol M."/>
            <person name="Vetter I."/>
            <person name="Vlcek C."/>
            <person name="Voet M."/>
            <person name="Volckaert G."/>
            <person name="Voss H."/>
            <person name="Wambutt R."/>
            <person name="Wedler H."/>
            <person name="Wiemann S."/>
            <person name="Winsor B."/>
            <person name="Wolfe K.H."/>
            <person name="Zollner A."/>
            <person name="Zumstein E."/>
            <person name="Kleine K."/>
        </authorList>
    </citation>
    <scope>NUCLEOTIDE SEQUENCE [LARGE SCALE GENOMIC DNA]</scope>
    <source>
        <strain>ATCC 204508 / S288c</strain>
    </source>
</reference>
<reference key="3">
    <citation type="journal article" date="2014" name="G3 (Bethesda)">
        <title>The reference genome sequence of Saccharomyces cerevisiae: Then and now.</title>
        <authorList>
            <person name="Engel S.R."/>
            <person name="Dietrich F.S."/>
            <person name="Fisk D.G."/>
            <person name="Binkley G."/>
            <person name="Balakrishnan R."/>
            <person name="Costanzo M.C."/>
            <person name="Dwight S.S."/>
            <person name="Hitz B.C."/>
            <person name="Karra K."/>
            <person name="Nash R.S."/>
            <person name="Weng S."/>
            <person name="Wong E.D."/>
            <person name="Lloyd P."/>
            <person name="Skrzypek M.S."/>
            <person name="Miyasato S.R."/>
            <person name="Simison M."/>
            <person name="Cherry J.M."/>
        </authorList>
    </citation>
    <scope>GENOME REANNOTATION</scope>
    <source>
        <strain>ATCC 204508 / S288c</strain>
    </source>
</reference>
<reference key="4">
    <citation type="journal article" date="2007" name="Genome Res.">
        <title>Approaching a complete repository of sequence-verified protein-encoding clones for Saccharomyces cerevisiae.</title>
        <authorList>
            <person name="Hu Y."/>
            <person name="Rolfs A."/>
            <person name="Bhullar B."/>
            <person name="Murthy T.V.S."/>
            <person name="Zhu C."/>
            <person name="Berger M.F."/>
            <person name="Camargo A.A."/>
            <person name="Kelley F."/>
            <person name="McCarron S."/>
            <person name="Jepson D."/>
            <person name="Richardson A."/>
            <person name="Raphael J."/>
            <person name="Moreira D."/>
            <person name="Taycher E."/>
            <person name="Zuo D."/>
            <person name="Mohr S."/>
            <person name="Kane M.F."/>
            <person name="Williamson J."/>
            <person name="Simpson A.J.G."/>
            <person name="Bulyk M.L."/>
            <person name="Harlow E."/>
            <person name="Marsischky G."/>
            <person name="Kolodner R.D."/>
            <person name="LaBaer J."/>
        </authorList>
    </citation>
    <scope>NUCLEOTIDE SEQUENCE [GENOMIC DNA]</scope>
    <source>
        <strain>ATCC 204508 / S288c</strain>
    </source>
</reference>
<reference key="5">
    <citation type="journal article" date="1998" name="J. Biol. Chem.">
        <title>Rrp6p, the yeast homologue of the human PM-Scl 100-kDa autoantigen, is essential for efficient 5.8 S rRNA 3' end formation.</title>
        <authorList>
            <person name="Briggs M.W."/>
            <person name="Burkard K.T.D."/>
            <person name="Butler J.S."/>
        </authorList>
    </citation>
    <scope>FUNCTION</scope>
</reference>
<reference key="6">
    <citation type="journal article" date="1999" name="Genes Dev.">
        <title>The yeast exosome and human PM-Scl are related complexes of 3'--&gt;5' exonucleases.</title>
        <authorList>
            <person name="Allmang C."/>
            <person name="Petfalski E."/>
            <person name="Podtelejnikov A."/>
            <person name="Mann M."/>
            <person name="Tollervey D."/>
            <person name="Mitchell P."/>
        </authorList>
    </citation>
    <scope>FUNCTION</scope>
    <scope>IDENTIFICATION IN THE RNA EXOSOME COMPLEX BY MASS SPECTROMETRY</scope>
    <scope>SUBCELLULAR LOCATION</scope>
    <scope>DISRUPTION PHENOTYPE</scope>
</reference>
<reference key="7">
    <citation type="journal article" date="2000" name="Mol. Cell. Biol.">
        <title>A nuclear 3'-5' exonuclease involved in mRNA degradation interacts with Poly(A) polymerase and the hnRNA protein Npl3p.</title>
        <authorList>
            <person name="Burkard K.T.D."/>
            <person name="Butler J.S."/>
        </authorList>
    </citation>
    <scope>CATALYTIC ACTIVITY</scope>
    <scope>FUNCTION</scope>
    <scope>INTERACTION WITH NPL3 AND PAP1</scope>
    <scope>SUBCELLULAR LOCATION</scope>
</reference>
<reference key="8">
    <citation type="journal article" date="2003" name="Mol. Cell. Biol.">
        <title>Rrp47p is an exosome-associated protein required for the 3' processing of stable RNAs.</title>
        <authorList>
            <person name="Mitchell P."/>
            <person name="Petfalski E."/>
            <person name="Houalla R."/>
            <person name="Podtelejnikov A."/>
            <person name="Mann M."/>
            <person name="Tollervey D."/>
        </authorList>
    </citation>
    <scope>INTERACTION WITH LRP1</scope>
</reference>
<reference key="9">
    <citation type="journal article" date="2003" name="Nature">
        <title>Global analysis of protein localization in budding yeast.</title>
        <authorList>
            <person name="Huh W.-K."/>
            <person name="Falvo J.V."/>
            <person name="Gerke L.C."/>
            <person name="Carroll A.S."/>
            <person name="Howson R.W."/>
            <person name="Weissman J.S."/>
            <person name="O'Shea E.K."/>
        </authorList>
    </citation>
    <scope>SUBCELLULAR LOCATION [LARGE SCALE ANALYSIS]</scope>
</reference>
<reference key="10">
    <citation type="journal article" date="2003" name="Nature">
        <title>Global analysis of protein expression in yeast.</title>
        <authorList>
            <person name="Ghaemmaghami S."/>
            <person name="Huh W.-K."/>
            <person name="Bower K."/>
            <person name="Howson R.W."/>
            <person name="Belle A."/>
            <person name="Dephoure N."/>
            <person name="O'Shea E.K."/>
            <person name="Weissman J.S."/>
        </authorList>
    </citation>
    <scope>LEVEL OF PROTEIN EXPRESSION [LARGE SCALE ANALYSIS]</scope>
</reference>
<reference evidence="19" key="11">
    <citation type="journal article" date="2003" name="RNA">
        <title>Contribution of domain structure to the RNA 3' end processing and degradation functions of the nuclear exosome subunit Rrp6p.</title>
        <authorList>
            <person name="Phillips S."/>
            <person name="Butler J.S."/>
        </authorList>
    </citation>
    <scope>FUNCTION</scope>
    <scope>SUBCELLULAR LOCATION</scope>
    <scope>DISRUPTION PHENOTYPE</scope>
    <scope>MUTAGENESIS OF ASP-238; GLU-240; ASP-296; TYR-361; ASP-365; TRP-448; ARG-449; ASP-456; ASP-457 AND 700-LYS--ARG-721</scope>
</reference>
<reference key="12">
    <citation type="journal article" date="2004" name="Genes Dev.">
        <title>Genome-wide mRNA surveillance is coupled to mRNA export.</title>
        <authorList>
            <person name="Hieronymus H."/>
            <person name="Yu M.C."/>
            <person name="Silver P.A."/>
        </authorList>
    </citation>
    <scope>FUNCTION</scope>
    <scope>INTERACTION WITH LRP1</scope>
    <scope>SUBCELLULAR LOCATION</scope>
</reference>
<reference key="13">
    <citation type="journal article" date="2006" name="Cell">
        <title>Reconstitution, activities, and structure of the eukaryotic RNA exosome.</title>
        <authorList>
            <person name="Liu Q."/>
            <person name="Greimann J.C."/>
            <person name="Lima C.D."/>
        </authorList>
    </citation>
    <scope>RECONSTITUTION OF THE RNA EXOSOME COMPLEX</scope>
    <scope>EXONUCLEASE ACTIVITY</scope>
</reference>
<reference key="14">
    <citation type="journal article" date="2007" name="Cell">
        <authorList>
            <person name="Liu Q."/>
            <person name="Greimann J.C."/>
            <person name="Lima C.D."/>
        </authorList>
    </citation>
    <scope>ERRATUM OF PUBMED:17174896</scope>
</reference>
<reference key="15">
    <citation type="journal article" date="2007" name="J. Proteome Res.">
        <title>Large-scale phosphorylation analysis of alpha-factor-arrested Saccharomyces cerevisiae.</title>
        <authorList>
            <person name="Li X."/>
            <person name="Gerber S.A."/>
            <person name="Rudner A.D."/>
            <person name="Beausoleil S.A."/>
            <person name="Haas W."/>
            <person name="Villen J."/>
            <person name="Elias J.E."/>
            <person name="Gygi S.P."/>
        </authorList>
    </citation>
    <scope>PHOSPHORYLATION [LARGE SCALE ANALYSIS] AT SER-138 AND SER-645</scope>
    <scope>IDENTIFICATION BY MASS SPECTROMETRY [LARGE SCALE ANALYSIS]</scope>
    <source>
        <strain>ADR376</strain>
    </source>
</reference>
<reference key="16">
    <citation type="journal article" date="2007" name="Nat. Struct. Mol. Biol.">
        <title>A single subunit, Dis3, is essentially responsible for yeast exosome core activity.</title>
        <authorList>
            <person name="Dziembowski A."/>
            <person name="Lorentzen E."/>
            <person name="Conti E."/>
            <person name="Seraphin B."/>
        </authorList>
    </citation>
    <scope>IDENTIFICATION BY MASS SPECTROMETRY</scope>
    <scope>INTERACTION WITH THE RNA EXOSOME</scope>
    <scope>SUBUNIT</scope>
    <scope>DISRUPTION PHENOTYPE</scope>
</reference>
<reference key="17">
    <citation type="journal article" date="2008" name="FEBS J.">
        <title>Nop53p interacts with 5.8S rRNA co-transcriptionally, and regulates processing of pre-rRNA by the exosome.</title>
        <authorList>
            <person name="Granato D.C."/>
            <person name="Machado-Santelli G.M."/>
            <person name="Oliveira C.C."/>
        </authorList>
    </citation>
    <scope>INTERACTION WITH NOP53</scope>
</reference>
<reference key="18">
    <citation type="journal article" date="2008" name="Mol. Cell. Proteomics">
        <title>A multidimensional chromatography technology for in-depth phosphoproteome analysis.</title>
        <authorList>
            <person name="Albuquerque C.P."/>
            <person name="Smolka M.B."/>
            <person name="Payne S.H."/>
            <person name="Bafna V."/>
            <person name="Eng J."/>
            <person name="Zhou H."/>
        </authorList>
    </citation>
    <scope>PHOSPHORYLATION [LARGE SCALE ANALYSIS] AT THR-520 AND SER-645</scope>
    <scope>IDENTIFICATION BY MASS SPECTROMETRY [LARGE SCALE ANALYSIS]</scope>
</reference>
<reference key="19">
    <citation type="journal article" date="2009" name="Science">
        <title>Global analysis of Cdk1 substrate phosphorylation sites provides insights into evolution.</title>
        <authorList>
            <person name="Holt L.J."/>
            <person name="Tuch B.B."/>
            <person name="Villen J."/>
            <person name="Johnson A.D."/>
            <person name="Gygi S.P."/>
            <person name="Morgan D.O."/>
        </authorList>
    </citation>
    <scope>PHOSPHORYLATION [LARGE SCALE ANALYSIS] AT SER-640 AND SER-645</scope>
    <scope>IDENTIFICATION BY MASS SPECTROMETRY [LARGE SCALE ANALYSIS]</scope>
</reference>
<reference evidence="19" key="20">
    <citation type="journal article" date="2011" name="RNA">
        <title>Activities of human RRP6 and structure of the human RRP6 catalytic domain.</title>
        <authorList>
            <person name="Januszyk K."/>
            <person name="Liu Q."/>
            <person name="Lima C.D."/>
        </authorList>
    </citation>
    <scope>CATALYTIC ACTIVITY</scope>
</reference>
<reference key="21">
    <citation type="journal article" date="2012" name="Proc. Natl. Acad. Sci. U.S.A.">
        <title>N-terminal acetylome analyses and functional insights of the N-terminal acetyltransferase NatB.</title>
        <authorList>
            <person name="Van Damme P."/>
            <person name="Lasa M."/>
            <person name="Polevoda B."/>
            <person name="Gazquez C."/>
            <person name="Elosegui-Artola A."/>
            <person name="Kim D.S."/>
            <person name="De Juan-Pardo E."/>
            <person name="Demeyer K."/>
            <person name="Hole K."/>
            <person name="Larrea E."/>
            <person name="Timmerman E."/>
            <person name="Prieto J."/>
            <person name="Arnesen T."/>
            <person name="Sherman F."/>
            <person name="Gevaert K."/>
            <person name="Aldabe R."/>
        </authorList>
    </citation>
    <scope>IDENTIFICATION BY MASS SPECTROMETRY [LARGE SCALE ANALYSIS]</scope>
</reference>
<reference evidence="20 21 22 23" key="22">
    <citation type="journal article" date="2006" name="Proc. Natl. Acad. Sci. U.S.A.">
        <title>Structure of the nuclear exosome component Rrp6p reveals an interplay between the active site and the HRDC domain.</title>
        <authorList>
            <person name="Midtgaard S.F."/>
            <person name="Assenholt J."/>
            <person name="Jonstrup A.T."/>
            <person name="Van L.B."/>
            <person name="Jensen T.H."/>
            <person name="Brodersen D.E."/>
        </authorList>
    </citation>
    <scope>X-RAY CRYSTALLOGRAPHY (2.10 ANGSTROMS) OF 129-536 IN COMPLEX WITH ZINC; MANGANESE; ADENOSINE MONOPHOSPHATE AND URIDINE MONOPHOSPHATE</scope>
    <scope>FUNCTION</scope>
    <scope>DISRUPTION PHENOTYPE</scope>
    <scope>MUTAGENESIS OF GLN-133; ASN-142 AND ASP-457</scope>
</reference>
<organism>
    <name type="scientific">Saccharomyces cerevisiae (strain ATCC 204508 / S288c)</name>
    <name type="common">Baker's yeast</name>
    <dbReference type="NCBI Taxonomy" id="559292"/>
    <lineage>
        <taxon>Eukaryota</taxon>
        <taxon>Fungi</taxon>
        <taxon>Dikarya</taxon>
        <taxon>Ascomycota</taxon>
        <taxon>Saccharomycotina</taxon>
        <taxon>Saccharomycetes</taxon>
        <taxon>Saccharomycetales</taxon>
        <taxon>Saccharomycetaceae</taxon>
        <taxon>Saccharomyces</taxon>
    </lineage>
</organism>
<name>RRP6_YEAST</name>
<accession>Q12149</accession>
<accession>D6W267</accession>
<accession>Q6B280</accession>
<proteinExistence type="evidence at protein level"/>
<feature type="chain" id="PRO_0000097456" description="Exosome complex exonuclease RRP6">
    <location>
        <begin position="1"/>
        <end position="733"/>
    </location>
</feature>
<feature type="domain" description="3'-5' exonuclease" evidence="1">
    <location>
        <begin position="214"/>
        <end position="380"/>
    </location>
</feature>
<feature type="domain" description="HRDC" evidence="2">
    <location>
        <begin position="435"/>
        <end position="515"/>
    </location>
</feature>
<feature type="region of interest" description="Disordered" evidence="3">
    <location>
        <begin position="662"/>
        <end position="733"/>
    </location>
</feature>
<feature type="short sequence motif" description="Nuclear localization signal" evidence="6 18">
    <location>
        <begin position="700"/>
        <end position="704"/>
    </location>
</feature>
<feature type="short sequence motif" description="Nuclear localization signal" evidence="6 18">
    <location>
        <begin position="718"/>
        <end position="721"/>
    </location>
</feature>
<feature type="compositionally biased region" description="Basic and acidic residues" evidence="3">
    <location>
        <begin position="667"/>
        <end position="680"/>
    </location>
</feature>
<feature type="compositionally biased region" description="Polar residues" evidence="3">
    <location>
        <begin position="687"/>
        <end position="697"/>
    </location>
</feature>
<feature type="compositionally biased region" description="Basic residues" evidence="3">
    <location>
        <begin position="716"/>
        <end position="733"/>
    </location>
</feature>
<feature type="binding site" evidence="11 21 22 23">
    <location>
        <position position="238"/>
    </location>
    <ligand>
        <name>Mn(2+)</name>
        <dbReference type="ChEBI" id="CHEBI:29035"/>
        <label>1</label>
    </ligand>
</feature>
<feature type="binding site" evidence="11 22 23">
    <location>
        <position position="238"/>
    </location>
    <ligand>
        <name>Zn(2+)</name>
        <dbReference type="ChEBI" id="CHEBI:29105"/>
    </ligand>
</feature>
<feature type="binding site" evidence="11 22">
    <location>
        <position position="240"/>
    </location>
    <ligand>
        <name>AMP</name>
        <dbReference type="ChEBI" id="CHEBI:456215"/>
    </ligand>
</feature>
<feature type="binding site" evidence="11 21">
    <location>
        <position position="240"/>
    </location>
    <ligand>
        <name>Mn(2+)</name>
        <dbReference type="ChEBI" id="CHEBI:29035"/>
        <label>2</label>
    </ligand>
</feature>
<feature type="binding site" evidence="11 23">
    <location>
        <position position="240"/>
    </location>
    <ligand>
        <name>UMP</name>
        <dbReference type="ChEBI" id="CHEBI:57865"/>
    </ligand>
</feature>
<feature type="binding site" evidence="11 22 23">
    <location>
        <position position="240"/>
    </location>
    <ligand>
        <name>Zn(2+)</name>
        <dbReference type="ChEBI" id="CHEBI:29105"/>
    </ligand>
</feature>
<feature type="binding site" evidence="11 22">
    <location>
        <position position="241"/>
    </location>
    <ligand>
        <name>AMP</name>
        <dbReference type="ChEBI" id="CHEBI:456215"/>
    </ligand>
</feature>
<feature type="binding site" evidence="11 23">
    <location>
        <position position="241"/>
    </location>
    <ligand>
        <name>UMP</name>
        <dbReference type="ChEBI" id="CHEBI:57865"/>
    </ligand>
</feature>
<feature type="binding site" evidence="11 21 22 23">
    <location>
        <position position="296"/>
    </location>
    <ligand>
        <name>Mn(2+)</name>
        <dbReference type="ChEBI" id="CHEBI:29035"/>
        <label>1</label>
    </ligand>
</feature>
<feature type="binding site" evidence="11 22">
    <location>
        <position position="299"/>
    </location>
    <ligand>
        <name>AMP</name>
        <dbReference type="ChEBI" id="CHEBI:456215"/>
    </ligand>
</feature>
<feature type="binding site" evidence="11 23">
    <location>
        <position position="299"/>
    </location>
    <ligand>
        <name>UMP</name>
        <dbReference type="ChEBI" id="CHEBI:57865"/>
    </ligand>
</feature>
<feature type="binding site" evidence="11 22">
    <location>
        <position position="342"/>
    </location>
    <ligand>
        <name>AMP</name>
        <dbReference type="ChEBI" id="CHEBI:456215"/>
    </ligand>
</feature>
<feature type="binding site" evidence="11 23">
    <location>
        <position position="342"/>
    </location>
    <ligand>
        <name>UMP</name>
        <dbReference type="ChEBI" id="CHEBI:57865"/>
    </ligand>
</feature>
<feature type="binding site" evidence="11 22">
    <location>
        <position position="345"/>
    </location>
    <ligand>
        <name>AMP</name>
        <dbReference type="ChEBI" id="CHEBI:456215"/>
    </ligand>
</feature>
<feature type="binding site" evidence="11 23">
    <location>
        <position position="345"/>
    </location>
    <ligand>
        <name>UMP</name>
        <dbReference type="ChEBI" id="CHEBI:57865"/>
    </ligand>
</feature>
<feature type="binding site" evidence="11 21">
    <location>
        <position position="365"/>
    </location>
    <ligand>
        <name>Mn(2+)</name>
        <dbReference type="ChEBI" id="CHEBI:29035"/>
        <label>2</label>
    </ligand>
</feature>
<feature type="binding site" evidence="11 22 23">
    <location>
        <position position="365"/>
    </location>
    <ligand>
        <name>Zn(2+)</name>
        <dbReference type="ChEBI" id="CHEBI:29105"/>
    </ligand>
</feature>
<feature type="modified residue" description="Phosphoserine" evidence="24">
    <location>
        <position position="138"/>
    </location>
</feature>
<feature type="modified residue" description="Phosphothreonine" evidence="25">
    <location>
        <position position="520"/>
    </location>
</feature>
<feature type="modified residue" description="Phosphoserine" evidence="26">
    <location>
        <position position="640"/>
    </location>
</feature>
<feature type="modified residue" description="Phosphoserine" evidence="24 25 26">
    <location>
        <position position="645"/>
    </location>
</feature>
<feature type="mutagenesis site" description="No significant effects on growth rates and degradation of 5' ETS RNA, increased accumulation of extended forms of snR40 snoRNA and 5.8S + 30 nt RNA; when associated with A-142." evidence="11">
    <original>Q</original>
    <variation>A</variation>
    <location>
        <position position="133"/>
    </location>
</feature>
<feature type="mutagenesis site" description="No significant effects on growth rates and degradation of 5' ETS RNA, increased accumulation of extended forms of snR40 snoRNA and 5.8S + 30 nt RNA; when associated with A-133." evidence="11">
    <original>N</original>
    <variation>A</variation>
    <location>
        <position position="142"/>
    </location>
</feature>
<feature type="mutagenesis site" description="Temperature-sensitive mutant. Abolishes exonuclease activity and increases accumulation of 5.8S + 30 nt RNA, 5' ETS RNA, U24 + 3 nt RNA and poly(A)+ snoRNAs. No effect on subcellular localization." evidence="6">
    <original>D</original>
    <variation>A</variation>
    <location>
        <position position="238"/>
    </location>
</feature>
<feature type="mutagenesis site" description="Temperature-sensitive mutant. Abolishes exonuclease activity and increases accumulation of 5.8S + 30 nt RNA, 5' ETS RNA and U24 + 3 nt RNA." evidence="6">
    <original>E</original>
    <variation>A</variation>
    <location>
        <position position="240"/>
    </location>
</feature>
<feature type="mutagenesis site" description="Temperature-sensitive mutant. Abolishes exonuclease activity and increases accumulation of 5.8S + 30 nt RNA, 5' ETS RNA and U24 + 3 nt RNA. No effect on subcellular localization." evidence="6">
    <original>D</original>
    <variation>A</variation>
    <location>
        <position position="296"/>
    </location>
</feature>
<feature type="mutagenesis site" description="Temperature-sensitive mutant. Abolishes exonuclease activity and increases accumulation of 5.8S + 30 nt RNA, 5' ETS RNA and U24 + 3 nt RNA." evidence="6">
    <original>Y</original>
    <variation>A</variation>
    <location>
        <position position="361"/>
    </location>
</feature>
<feature type="mutagenesis site" description="Temperature-sensitive mutant. Abolishes exonuclease activity and increases accumulation of 5.8S + 30 nt RNA, 5' ETS RNA and U24 + 3 nt RNA. No effect on subcellular localization." evidence="6">
    <original>Y</original>
    <variation>F</variation>
    <location>
        <position position="361"/>
    </location>
</feature>
<feature type="mutagenesis site" description="Temperature-sensitive mutant. Abolishes exonuclease activity and increases accumulation of 5.8S + 30 nt RNA, 5' ETS RNA and U24 + 3 nt RNA." evidence="6">
    <original>D</original>
    <variation>A</variation>
    <location>
        <position position="365"/>
    </location>
</feature>
<feature type="mutagenesis site" description="No significant effects on growth at different temperatures, in vitro exonuclease activity and processing 5.8S rRNA, U24 snoRNA and ETS RNA." evidence="6">
    <original>W</original>
    <variation>A</variation>
    <location>
        <position position="448"/>
    </location>
</feature>
<feature type="mutagenesis site" description="No significant effects on growth at different temperatures and processing 5.8S rRNA, U24 snoRNA and ETS RNA. Reduces exonuclease activity." evidence="6">
    <original>R</original>
    <variation>A</variation>
    <location>
        <position position="449"/>
    </location>
</feature>
<feature type="mutagenesis site" description="No significant effects on growth at different temperatures, in vitro exonuclease activity and processing 5.8S rRNA, U24 snoRNA and ETS RNA." evidence="6">
    <original>D</original>
    <variation>A</variation>
    <location>
        <position position="456"/>
    </location>
</feature>
<feature type="mutagenesis site" description="No significant effects on growth rates at different temperatures, processing 5' ETS RNA and poly(A)+ snoRNAs, non-significant or moderate defects in 5.8S rRNA processing resulting in accumulation of 5.8S + 30 nt RNA, increased accumulation of extended forms of snR40 snoRNA and U24 + 3 nt snoRNA. Reduces exonuclease activity. No effect on subcellular localization." evidence="6 11">
    <original>D</original>
    <variation>A</variation>
    <location>
        <position position="457"/>
    </location>
</feature>
<feature type="mutagenesis site" description="Results in cytoplasmic accumulation of the protein. No significant effects on processing 5.8S rRNA, U24 snoRNA and ETS RNA." evidence="6">
    <original>KKRRFDPSSSDSNGPRAAKKRR</original>
    <variation>FDPSSSDSNGPRAA</variation>
    <location>
        <begin position="700"/>
        <end position="721"/>
    </location>
</feature>
<feature type="sequence conflict" description="In Ref. 4; AAT92869." evidence="19" ref="4">
    <original>E</original>
    <variation>G</variation>
    <location>
        <position position="402"/>
    </location>
</feature>
<feature type="helix" evidence="30">
    <location>
        <begin position="8"/>
        <end position="25"/>
    </location>
</feature>
<feature type="helix" evidence="30">
    <location>
        <begin position="28"/>
        <end position="34"/>
    </location>
</feature>
<feature type="helix" evidence="30">
    <location>
        <begin position="36"/>
        <end position="60"/>
    </location>
</feature>
<feature type="helix" evidence="30">
    <location>
        <begin position="76"/>
        <end position="105"/>
    </location>
</feature>
<feature type="helix" evidence="27">
    <location>
        <begin position="132"/>
        <end position="135"/>
    </location>
</feature>
<feature type="strand" evidence="29">
    <location>
        <begin position="136"/>
        <end position="138"/>
    </location>
</feature>
<feature type="helix" evidence="27">
    <location>
        <begin position="162"/>
        <end position="165"/>
    </location>
</feature>
<feature type="strand" evidence="27">
    <location>
        <begin position="173"/>
        <end position="175"/>
    </location>
</feature>
<feature type="helix" evidence="27">
    <location>
        <begin position="184"/>
        <end position="189"/>
    </location>
</feature>
<feature type="helix" evidence="27">
    <location>
        <begin position="194"/>
        <end position="196"/>
    </location>
</feature>
<feature type="helix" evidence="27">
    <location>
        <begin position="208"/>
        <end position="210"/>
    </location>
</feature>
<feature type="strand" evidence="27">
    <location>
        <begin position="214"/>
        <end position="216"/>
    </location>
</feature>
<feature type="helix" evidence="27">
    <location>
        <begin position="219"/>
        <end position="229"/>
    </location>
</feature>
<feature type="strand" evidence="27">
    <location>
        <begin position="233"/>
        <end position="242"/>
    </location>
</feature>
<feature type="strand" evidence="27">
    <location>
        <begin position="244"/>
        <end position="248"/>
    </location>
</feature>
<feature type="strand" evidence="27">
    <location>
        <begin position="250"/>
        <end position="257"/>
    </location>
</feature>
<feature type="strand" evidence="27">
    <location>
        <begin position="262"/>
        <end position="266"/>
    </location>
</feature>
<feature type="turn" evidence="27">
    <location>
        <begin position="267"/>
        <end position="273"/>
    </location>
</feature>
<feature type="helix" evidence="27">
    <location>
        <begin position="274"/>
        <end position="277"/>
    </location>
</feature>
<feature type="helix" evidence="27">
    <location>
        <begin position="278"/>
        <end position="281"/>
    </location>
</feature>
<feature type="strand" evidence="27">
    <location>
        <begin position="286"/>
        <end position="292"/>
    </location>
</feature>
<feature type="helix" evidence="27">
    <location>
        <begin position="294"/>
        <end position="304"/>
    </location>
</feature>
<feature type="strand" evidence="27">
    <location>
        <begin position="309"/>
        <end position="313"/>
    </location>
</feature>
<feature type="helix" evidence="27">
    <location>
        <begin position="314"/>
        <end position="321"/>
    </location>
</feature>
<feature type="helix" evidence="27">
    <location>
        <begin position="328"/>
        <end position="335"/>
    </location>
</feature>
<feature type="turn" evidence="27">
    <location>
        <begin position="343"/>
        <end position="346"/>
    </location>
</feature>
<feature type="strand" evidence="32">
    <location>
        <begin position="351"/>
        <end position="353"/>
    </location>
</feature>
<feature type="helix" evidence="27">
    <location>
        <begin position="356"/>
        <end position="367"/>
    </location>
</feature>
<feature type="helix" evidence="27">
    <location>
        <begin position="369"/>
        <end position="382"/>
    </location>
</feature>
<feature type="helix" evidence="27">
    <location>
        <begin position="386"/>
        <end position="398"/>
    </location>
</feature>
<feature type="helix" evidence="27">
    <location>
        <begin position="404"/>
        <end position="406"/>
    </location>
</feature>
<feature type="strand" evidence="27">
    <location>
        <begin position="413"/>
        <end position="416"/>
    </location>
</feature>
<feature type="strand" evidence="27">
    <location>
        <begin position="421"/>
        <end position="427"/>
    </location>
</feature>
<feature type="helix" evidence="31">
    <location>
        <begin position="436"/>
        <end position="438"/>
    </location>
</feature>
<feature type="helix" evidence="27">
    <location>
        <begin position="439"/>
        <end position="456"/>
    </location>
</feature>
<feature type="helix" evidence="27">
    <location>
        <begin position="460"/>
        <end position="463"/>
    </location>
</feature>
<feature type="helix" evidence="27">
    <location>
        <begin position="466"/>
        <end position="475"/>
    </location>
</feature>
<feature type="helix" evidence="27">
    <location>
        <begin position="480"/>
        <end position="484"/>
    </location>
</feature>
<feature type="helix" evidence="27">
    <location>
        <begin position="492"/>
        <end position="496"/>
    </location>
</feature>
<feature type="helix" evidence="27">
    <location>
        <begin position="498"/>
        <end position="515"/>
    </location>
</feature>
<feature type="turn" evidence="28">
    <location>
        <begin position="534"/>
        <end position="536"/>
    </location>
</feature>
<feature type="helix" evidence="28">
    <location>
        <begin position="539"/>
        <end position="553"/>
    </location>
</feature>
<feature type="turn" evidence="29">
    <location>
        <begin position="555"/>
        <end position="558"/>
    </location>
</feature>
<feature type="strand" evidence="28">
    <location>
        <begin position="570"/>
        <end position="572"/>
    </location>
</feature>
<feature type="turn" evidence="28">
    <location>
        <begin position="573"/>
        <end position="577"/>
    </location>
</feature>
<feature type="strand" evidence="28">
    <location>
        <begin position="582"/>
        <end position="585"/>
    </location>
</feature>
<feature type="strand" evidence="33">
    <location>
        <begin position="587"/>
        <end position="589"/>
    </location>
</feature>
<feature type="strand" evidence="28">
    <location>
        <begin position="591"/>
        <end position="594"/>
    </location>
</feature>
<feature type="helix" evidence="28">
    <location>
        <begin position="596"/>
        <end position="611"/>
    </location>
</feature>
<feature type="helix" evidence="28">
    <location>
        <begin position="612"/>
        <end position="614"/>
    </location>
</feature>
<feature type="strand" evidence="28">
    <location>
        <begin position="617"/>
        <end position="619"/>
    </location>
</feature>
<comment type="function">
    <text evidence="4 5 6 10 11 15">Nuclear-specific catalytic component of the RNA exosome complex which has 3'-&gt;5' exoribonuclease activity and participates in a multitude of cellular RNA processing and degradation events. In the nucleus, the RNA exosome complex is involved in proper maturation of stable RNA species such as rRNA, snRNA and snoRNA, in the elimination of RNA processing by-products and non-coding 'pervasive' transcripts, such as antisense RNA species and cryptic unstable transcripts (CUTs), and of mRNAs with processing defects, thereby limiting or excluding their export to the cytoplasm. The catalytic inactive RNA exosome core complex of 9 subunits (Exo-9) is proposed to play a pivotal role in the binding and presentation of RNA for ribonucleolysis, and to serve as a scaffold for the association with catalytic subunits and accessory proteins or complexes. RRP6 has 3'-5' exonuclease activity which is not modulated upon association with Exo-9 suggesting that the complex inner RNA-binding path is not used to access its active site.</text>
</comment>
<comment type="subunit">
    <text evidence="4 5 7 10 12 13">Component of the RNA exosome complex. Specifically part of the catalytically inactive RNA exosome core complex (Exo-9) which may associate with the catalytic subunits RRP6 and DIS3 in cytoplasmic- and nuclear-specific RNA exosome complex forms. Exo-9 is formed by a hexameric base ring of RNase PH domain-containing subunits and a cap ring consisting of CSL4, RRP4 and RRP40. RRP6 specifically is part of the nuclear form of the RNA exosome complex; the association appears to be mediated by Exo-9 and not by DIS3. Interacts with LRP1. Interacts with NPL3, NOP53 and PAP1.</text>
</comment>
<comment type="interaction">
    <interactant intactId="EBI-1782">
        <id>Q12149</id>
    </interactant>
    <interactant intactId="EBI-11592">
        <id>P47047</id>
        <label>MTR4</label>
    </interactant>
    <organismsDiffer>false</organismsDiffer>
    <experiments>3</experiments>
</comment>
<comment type="interaction">
    <interactant intactId="EBI-1782">
        <id>Q12149</id>
    </interactant>
    <interactant intactId="EBI-12228">
        <id>P53617</id>
        <label>NRD1</label>
    </interactant>
    <organismsDiffer>false</organismsDiffer>
    <experiments>4</experiments>
</comment>
<comment type="interaction">
    <interactant intactId="EBI-1782">
        <id>Q12149</id>
    </interactant>
    <interactant intactId="EBI-1788">
        <id>P46948</id>
        <label>SKI6</label>
    </interactant>
    <organismsDiffer>false</organismsDiffer>
    <experiments>4</experiments>
</comment>
<comment type="subcellular location">
    <subcellularLocation>
        <location evidence="4 5 8 10">Nucleus</location>
        <location evidence="4 5 8 10">Nucleolus</location>
    </subcellularLocation>
    <subcellularLocation>
        <location evidence="6">Nucleus</location>
    </subcellularLocation>
</comment>
<comment type="disruption phenotype">
    <text evidence="4 6 11 12">Deletion mutant is temperature-sensitive (PubMed:10465791, PubMed:12923258, PubMed:16882719, PubMed:17173052). Impaired growth at 37 degrees Celsius (PubMed:12923258, PubMed:16882719, PubMed:17173052). Impaired growth at all temperatures, nonviable at 37 degrees Celsius (PubMed:10465791). Mutant is defective in the 3' processing of the 5.8S rRNA and accumulates a discrete species, 5.8S + 30, that is 3' extended by 30 nucleotides (PubMed:10465791, PubMed:12923258, PubMed:16882719). Accumulates 7S RNA (PubMed:12923258, PubMed:17173052). Accumulates 5' external transcribed spacer (ETS) RNA (PubMed:10465791, PubMed:12923258, PubMed:16882719, PubMed:17173052). Accumulates extended forms of snR40 small nucleolar RNA (snoRNA) (PubMed:12923258, PubMed:16882719). Accumulates U24 + 3 snoRNA (PubMed:12923258). Accumulates poly(A)+ snoRNAs (PubMed:12923258).</text>
</comment>
<comment type="miscellaneous">
    <text evidence="9">Present with 2160 molecules/cell in log phase SD medium.</text>
</comment>
<comment type="similarity">
    <text evidence="19">Belongs to the exosome component 10/RRP6 family.</text>
</comment>
<gene>
    <name type="primary">RRP6</name>
    <name type="synonym">UNC733</name>
    <name type="ordered locus">YOR001W</name>
</gene>
<evidence type="ECO:0000255" key="1"/>
<evidence type="ECO:0000255" key="2">
    <source>
        <dbReference type="PROSITE-ProRule" id="PRU00328"/>
    </source>
</evidence>
<evidence type="ECO:0000256" key="3">
    <source>
        <dbReference type="SAM" id="MobiDB-lite"/>
    </source>
</evidence>
<evidence type="ECO:0000269" key="4">
    <source>
    </source>
</evidence>
<evidence type="ECO:0000269" key="5">
    <source>
    </source>
</evidence>
<evidence type="ECO:0000269" key="6">
    <source>
    </source>
</evidence>
<evidence type="ECO:0000269" key="7">
    <source>
    </source>
</evidence>
<evidence type="ECO:0000269" key="8">
    <source>
    </source>
</evidence>
<evidence type="ECO:0000269" key="9">
    <source>
    </source>
</evidence>
<evidence type="ECO:0000269" key="10">
    <source>
    </source>
</evidence>
<evidence type="ECO:0000269" key="11">
    <source>
    </source>
</evidence>
<evidence type="ECO:0000269" key="12">
    <source>
    </source>
</evidence>
<evidence type="ECO:0000269" key="13">
    <source>
    </source>
</evidence>
<evidence type="ECO:0000269" key="14">
    <source>
    </source>
</evidence>
<evidence type="ECO:0000269" key="15">
    <source>
    </source>
</evidence>
<evidence type="ECO:0000303" key="16">
    <source>
    </source>
</evidence>
<evidence type="ECO:0000303" key="17">
    <source>
    </source>
</evidence>
<evidence type="ECO:0000303" key="18">
    <source>
    </source>
</evidence>
<evidence type="ECO:0000305" key="19"/>
<evidence type="ECO:0007744" key="20">
    <source>
        <dbReference type="PDB" id="2HBJ"/>
    </source>
</evidence>
<evidence type="ECO:0007744" key="21">
    <source>
        <dbReference type="PDB" id="2HBK"/>
    </source>
</evidence>
<evidence type="ECO:0007744" key="22">
    <source>
        <dbReference type="PDB" id="2HBL"/>
    </source>
</evidence>
<evidence type="ECO:0007744" key="23">
    <source>
        <dbReference type="PDB" id="2HBM"/>
    </source>
</evidence>
<evidence type="ECO:0007744" key="24">
    <source>
    </source>
</evidence>
<evidence type="ECO:0007744" key="25">
    <source>
    </source>
</evidence>
<evidence type="ECO:0007744" key="26">
    <source>
    </source>
</evidence>
<evidence type="ECO:0007829" key="27">
    <source>
        <dbReference type="PDB" id="2HBJ"/>
    </source>
</evidence>
<evidence type="ECO:0007829" key="28">
    <source>
        <dbReference type="PDB" id="4IFD"/>
    </source>
</evidence>
<evidence type="ECO:0007829" key="29">
    <source>
        <dbReference type="PDB" id="4OO1"/>
    </source>
</evidence>
<evidence type="ECO:0007829" key="30">
    <source>
        <dbReference type="PDB" id="4WFC"/>
    </source>
</evidence>
<evidence type="ECO:0007829" key="31">
    <source>
        <dbReference type="PDB" id="5C0Y"/>
    </source>
</evidence>
<evidence type="ECO:0007829" key="32">
    <source>
        <dbReference type="PDB" id="5K36"/>
    </source>
</evidence>
<evidence type="ECO:0007829" key="33">
    <source>
        <dbReference type="PDB" id="5VZJ"/>
    </source>
</evidence>
<sequence>MTSENPDVLLSRVINVVRAASSLASQDVDFYKNLDRGFSKDLKSKADKLADMANEIILSIDEHHESFELKEEDISDLWNNFGNIMDNLLEMSDHSLDKLNCAINSKSRGSDLQYLGEFSGKNFSPTKRVEKPQLKFKSPIDNSESHPFIPLLKEKPNALKPLSESLRLVDDDENNPSHYPHPYEYEIDHQEYSPEILQIREEIPSKSWDDSVPIWVDTSTELESMLEDLKNTKEIAVDLEHHDYRSYYGIVCLMQISTRERDYLVDTLKLRENLHILNEVFTNPSIVKVFHGAFMDIIWLQRDLGLYVVGLFDTYHASKAIGLPRHSLAYLLENFANFKTSKKYQLADWRIRPLSKPMTAYARADTHFLLNIYDQLRNKLIESNKLAGVLYESRNVAKRRFEYSKYRPLTPSSEVYSPIEKESPWKILMYQYNIPPEREVLVRELYQWRDLIARRDDESPRFVMPNQLLAALVAYTPTDVIGVVSLTNGVTEHVRQNAKLLANLIRDALRNIKNTNEEATPIPSSETKADGILLETISVPQIRDVMERFSVLCNSNISKSRAKPVTNSSILLGKILPREEHDIAYSKDGLPNKVKTEDIRIRAQNFKSALANLEDIIFEIEKPLVVPVKLEEIKTVDPASAPNHSPEIDNLDDLVVLKKKNIQKKQPAKEKGVTEKDAVDYSKIPNILSNKPGQNNRQQKKRRFDPSSSDSNGPRAAKKRRPAAKGKNLSFKR</sequence>